<keyword id="KW-0443">Lipid metabolism</keyword>
<keyword id="KW-0521">NADP</keyword>
<keyword id="KW-0560">Oxidoreductase</keyword>
<keyword id="KW-1185">Reference proteome</keyword>
<sequence length="334" mass="36366">MAVASVAAALLAALGGALWLAARRFSGPRNQRQQGGGDPGLMHGKTVLITGANSGLGRATAAELLRLGARVIMGCRDRARAEEAAGQLRQELCQAGGAGPDGTDGQLVVKELDLASLRSVRAFCQELLQEEPRLDVLINNAGVFHCPYTKTEDGFEMQFGVNHLGHFLLTNLLLGLLKSSAPSRIVVVSSKLYKYGEINFEDLNSEQSYNKSFCYSRSKLANILFTRELARRLEGTNVTVNVLHPGIVRTNLGRHIHIPLLARPLFNLVSWAFFKTPLEGAQTSIYLACSPDVEGVSGRYFGDCKEEELLPKAMDESVARKLWDISEVMVGILK</sequence>
<gene>
    <name type="primary">Rdh14</name>
    <name evidence="4" type="synonym">Pan2</name>
</gene>
<proteinExistence type="evidence at protein level"/>
<evidence type="ECO:0000250" key="1"/>
<evidence type="ECO:0000250" key="2">
    <source>
        <dbReference type="UniProtKB" id="Q8WNV7"/>
    </source>
</evidence>
<evidence type="ECO:0000269" key="3">
    <source>
    </source>
</evidence>
<evidence type="ECO:0000303" key="4">
    <source ref="1"/>
</evidence>
<evidence type="ECO:0000305" key="5"/>
<organism>
    <name type="scientific">Mus musculus</name>
    <name type="common">Mouse</name>
    <dbReference type="NCBI Taxonomy" id="10090"/>
    <lineage>
        <taxon>Eukaryota</taxon>
        <taxon>Metazoa</taxon>
        <taxon>Chordata</taxon>
        <taxon>Craniata</taxon>
        <taxon>Vertebrata</taxon>
        <taxon>Euteleostomi</taxon>
        <taxon>Mammalia</taxon>
        <taxon>Eutheria</taxon>
        <taxon>Euarchontoglires</taxon>
        <taxon>Glires</taxon>
        <taxon>Rodentia</taxon>
        <taxon>Myomorpha</taxon>
        <taxon>Muroidea</taxon>
        <taxon>Muridae</taxon>
        <taxon>Murinae</taxon>
        <taxon>Mus</taxon>
        <taxon>Mus</taxon>
    </lineage>
</organism>
<dbReference type="EC" id="1.1.1.300" evidence="3"/>
<dbReference type="EMBL" id="AF303831">
    <property type="protein sequence ID" value="AAG30904.1"/>
    <property type="molecule type" value="mRNA"/>
</dbReference>
<dbReference type="EMBL" id="BC020094">
    <property type="protein sequence ID" value="AAH20094.1"/>
    <property type="molecule type" value="mRNA"/>
</dbReference>
<dbReference type="CCDS" id="CCDS25811.1"/>
<dbReference type="RefSeq" id="NP_076186.1">
    <property type="nucleotide sequence ID" value="NM_023697.2"/>
</dbReference>
<dbReference type="SMR" id="Q9ERI6"/>
<dbReference type="BioGRID" id="222748">
    <property type="interactions" value="1"/>
</dbReference>
<dbReference type="FunCoup" id="Q9ERI6">
    <property type="interactions" value="2563"/>
</dbReference>
<dbReference type="STRING" id="10090.ENSMUSP00000020947"/>
<dbReference type="SwissLipids" id="SLP:000001820"/>
<dbReference type="GlyGen" id="Q9ERI6">
    <property type="glycosylation" value="1 site, 1 N-linked glycan (1 site)"/>
</dbReference>
<dbReference type="iPTMnet" id="Q9ERI6"/>
<dbReference type="PhosphoSitePlus" id="Q9ERI6"/>
<dbReference type="SwissPalm" id="Q9ERI6"/>
<dbReference type="jPOST" id="Q9ERI6"/>
<dbReference type="PaxDb" id="10090-ENSMUSP00000020947"/>
<dbReference type="PeptideAtlas" id="Q9ERI6"/>
<dbReference type="ProteomicsDB" id="255140"/>
<dbReference type="Pumba" id="Q9ERI6"/>
<dbReference type="Antibodypedia" id="47311">
    <property type="antibodies" value="115 antibodies from 17 providers"/>
</dbReference>
<dbReference type="DNASU" id="105014"/>
<dbReference type="Ensembl" id="ENSMUST00000020947.7">
    <property type="protein sequence ID" value="ENSMUSP00000020947.6"/>
    <property type="gene ID" value="ENSMUSG00000020621.7"/>
</dbReference>
<dbReference type="GeneID" id="105014"/>
<dbReference type="KEGG" id="mmu:105014"/>
<dbReference type="UCSC" id="uc007nar.2">
    <property type="organism name" value="mouse"/>
</dbReference>
<dbReference type="AGR" id="MGI:1920402"/>
<dbReference type="CTD" id="57665"/>
<dbReference type="MGI" id="MGI:1920402">
    <property type="gene designation" value="Rdh14"/>
</dbReference>
<dbReference type="VEuPathDB" id="HostDB:ENSMUSG00000020621"/>
<dbReference type="eggNOG" id="KOG1208">
    <property type="taxonomic scope" value="Eukaryota"/>
</dbReference>
<dbReference type="GeneTree" id="ENSGT00940000160181"/>
<dbReference type="HOGENOM" id="CLU_010194_44_5_1"/>
<dbReference type="InParanoid" id="Q9ERI6"/>
<dbReference type="OMA" id="NTTWCAT"/>
<dbReference type="OrthoDB" id="191139at2759"/>
<dbReference type="PhylomeDB" id="Q9ERI6"/>
<dbReference type="TreeFam" id="TF105429"/>
<dbReference type="Reactome" id="R-MMU-5365859">
    <property type="pathway name" value="RA biosynthesis pathway"/>
</dbReference>
<dbReference type="BioGRID-ORCS" id="105014">
    <property type="hits" value="5 hits in 81 CRISPR screens"/>
</dbReference>
<dbReference type="CD-CODE" id="CE726F99">
    <property type="entry name" value="Postsynaptic density"/>
</dbReference>
<dbReference type="PRO" id="PR:Q9ERI6"/>
<dbReference type="Proteomes" id="UP000000589">
    <property type="component" value="Chromosome 12"/>
</dbReference>
<dbReference type="RNAct" id="Q9ERI6">
    <property type="molecule type" value="protein"/>
</dbReference>
<dbReference type="Bgee" id="ENSMUSG00000020621">
    <property type="expression patterns" value="Expressed in interventricular septum and 238 other cell types or tissues"/>
</dbReference>
<dbReference type="GO" id="GO:0005829">
    <property type="term" value="C:cytosol"/>
    <property type="evidence" value="ECO:0007669"/>
    <property type="project" value="Ensembl"/>
</dbReference>
<dbReference type="GO" id="GO:0005783">
    <property type="term" value="C:endoplasmic reticulum"/>
    <property type="evidence" value="ECO:0007669"/>
    <property type="project" value="Ensembl"/>
</dbReference>
<dbReference type="GO" id="GO:0005739">
    <property type="term" value="C:mitochondrion"/>
    <property type="evidence" value="ECO:0007005"/>
    <property type="project" value="MGI"/>
</dbReference>
<dbReference type="GO" id="GO:0005654">
    <property type="term" value="C:nucleoplasm"/>
    <property type="evidence" value="ECO:0007669"/>
    <property type="project" value="Ensembl"/>
</dbReference>
<dbReference type="GO" id="GO:0102354">
    <property type="term" value="F:11-cis-retinol dehydrogenase activity"/>
    <property type="evidence" value="ECO:0007669"/>
    <property type="project" value="RHEA"/>
</dbReference>
<dbReference type="GO" id="GO:0008106">
    <property type="term" value="F:alcohol dehydrogenase (NADP+) activity"/>
    <property type="evidence" value="ECO:0000314"/>
    <property type="project" value="MGI"/>
</dbReference>
<dbReference type="GO" id="GO:0052650">
    <property type="term" value="F:all-trans-retinol dehydrogenase (NADP+) activity"/>
    <property type="evidence" value="ECO:0000314"/>
    <property type="project" value="UniProtKB"/>
</dbReference>
<dbReference type="GO" id="GO:0042572">
    <property type="term" value="P:retinol metabolic process"/>
    <property type="evidence" value="ECO:0000314"/>
    <property type="project" value="UniProtKB"/>
</dbReference>
<dbReference type="FunFam" id="3.40.50.720:FF:000331">
    <property type="entry name" value="Retinol dehydrogenase 14 (All-trans/9-cis/11-cis)"/>
    <property type="match status" value="1"/>
</dbReference>
<dbReference type="Gene3D" id="3.40.50.720">
    <property type="entry name" value="NAD(P)-binding Rossmann-like Domain"/>
    <property type="match status" value="1"/>
</dbReference>
<dbReference type="InterPro" id="IPR036291">
    <property type="entry name" value="NAD(P)-bd_dom_sf"/>
</dbReference>
<dbReference type="InterPro" id="IPR002347">
    <property type="entry name" value="SDR_fam"/>
</dbReference>
<dbReference type="PANTHER" id="PTHR43157">
    <property type="entry name" value="PHOSPHATIDYLINOSITOL-GLYCAN BIOSYNTHESIS CLASS F PROTEIN-RELATED"/>
    <property type="match status" value="1"/>
</dbReference>
<dbReference type="PANTHER" id="PTHR43157:SF72">
    <property type="entry name" value="RETINOL DEHYDROGENASE 14"/>
    <property type="match status" value="1"/>
</dbReference>
<dbReference type="Pfam" id="PF00106">
    <property type="entry name" value="adh_short"/>
    <property type="match status" value="1"/>
</dbReference>
<dbReference type="PRINTS" id="PR00081">
    <property type="entry name" value="GDHRDH"/>
</dbReference>
<dbReference type="PRINTS" id="PR00080">
    <property type="entry name" value="SDRFAMILY"/>
</dbReference>
<dbReference type="SUPFAM" id="SSF51735">
    <property type="entry name" value="NAD(P)-binding Rossmann-fold domains"/>
    <property type="match status" value="1"/>
</dbReference>
<protein>
    <recommendedName>
        <fullName>Retinol dehydrogenase 14</fullName>
        <ecNumber evidence="3">1.1.1.300</ecNumber>
    </recommendedName>
    <alternativeName>
        <fullName evidence="4">Alcohol dehydrogenase PAN2</fullName>
    </alternativeName>
</protein>
<name>RDH14_MOUSE</name>
<feature type="chain" id="PRO_0000054771" description="Retinol dehydrogenase 14">
    <location>
        <begin position="1"/>
        <end position="334"/>
    </location>
</feature>
<feature type="active site" description="Proton acceptor" evidence="2">
    <location>
        <position position="215"/>
    </location>
</feature>
<feature type="binding site" evidence="1">
    <location>
        <begin position="51"/>
        <end position="57"/>
    </location>
    <ligand>
        <name>NADP(+)</name>
        <dbReference type="ChEBI" id="CHEBI:58349"/>
    </ligand>
</feature>
<feature type="binding site" evidence="1">
    <location>
        <position position="190"/>
    </location>
    <ligand>
        <name>substrate</name>
    </ligand>
</feature>
<accession>Q9ERI6</accession>
<comment type="function">
    <text evidence="3">Retinol dehydrogenase with a clear preference for NADP. Displays high activity towards 9-cis, 11-cis and all-trans-retinol. Shows a very weak activity towards 13-cis-retinol. Has no activity towards steroids.</text>
</comment>
<comment type="catalytic activity">
    <reaction evidence="3">
        <text>all-trans-retinol + NADP(+) = all-trans-retinal + NADPH + H(+)</text>
        <dbReference type="Rhea" id="RHEA:25033"/>
        <dbReference type="ChEBI" id="CHEBI:15378"/>
        <dbReference type="ChEBI" id="CHEBI:17336"/>
        <dbReference type="ChEBI" id="CHEBI:17898"/>
        <dbReference type="ChEBI" id="CHEBI:57783"/>
        <dbReference type="ChEBI" id="CHEBI:58349"/>
        <dbReference type="EC" id="1.1.1.300"/>
    </reaction>
</comment>
<comment type="catalytic activity">
    <reaction evidence="3">
        <text>11-cis-retinol + NADP(+) = 11-cis-retinal + NADPH + H(+)</text>
        <dbReference type="Rhea" id="RHEA:54912"/>
        <dbReference type="ChEBI" id="CHEBI:15378"/>
        <dbReference type="ChEBI" id="CHEBI:16066"/>
        <dbReference type="ChEBI" id="CHEBI:16302"/>
        <dbReference type="ChEBI" id="CHEBI:57783"/>
        <dbReference type="ChEBI" id="CHEBI:58349"/>
    </reaction>
</comment>
<comment type="catalytic activity">
    <reaction evidence="3">
        <text>9-cis-retinol + NADP(+) = 9-cis-retinal + NADPH + H(+)</text>
        <dbReference type="Rhea" id="RHEA:54916"/>
        <dbReference type="ChEBI" id="CHEBI:15378"/>
        <dbReference type="ChEBI" id="CHEBI:57783"/>
        <dbReference type="ChEBI" id="CHEBI:58349"/>
        <dbReference type="ChEBI" id="CHEBI:78272"/>
        <dbReference type="ChEBI" id="CHEBI:78273"/>
    </reaction>
</comment>
<comment type="miscellaneous">
    <text evidence="3">Shows clear specificity for the pro-S hydrogen on C4 of NADPH and the pro-R hydrogen on C15 of retinols.</text>
</comment>
<comment type="similarity">
    <text evidence="5">Belongs to the short-chain dehydrogenases/reductases (SDR) family.</text>
</comment>
<reference key="1">
    <citation type="submission" date="2000-09" db="EMBL/GenBank/DDBJ databases">
        <title>Cloning of the mouse Pan2 cDNA: a novel member of the short chain alcohol dehydrogenase superfamily.</title>
        <authorList>
            <person name="Li K.X."/>
            <person name="Brereton P.S."/>
            <person name="Obeyesekere V.R."/>
            <person name="Krozowski Z.S."/>
        </authorList>
    </citation>
    <scope>NUCLEOTIDE SEQUENCE [MRNA]</scope>
    <source>
        <strain>C57BL/6J</strain>
        <tissue>Fetus</tissue>
    </source>
</reference>
<reference key="2">
    <citation type="journal article" date="2004" name="Genome Res.">
        <title>The status, quality, and expansion of the NIH full-length cDNA project: the Mammalian Gene Collection (MGC).</title>
        <authorList>
            <consortium name="The MGC Project Team"/>
        </authorList>
    </citation>
    <scope>NUCLEOTIDE SEQUENCE [LARGE SCALE MRNA]</scope>
    <source>
        <tissue>Mammary tumor</tissue>
    </source>
</reference>
<reference key="3">
    <citation type="journal article" date="2002" name="J. Biol. Chem.">
        <title>Dual-substrate specificity short chain retinol dehydrogenases from the vertebrate retina.</title>
        <authorList>
            <person name="Haeseleer F."/>
            <person name="Jang G.-F."/>
            <person name="Imanishi Y."/>
            <person name="Driessen C.A.G.G."/>
            <person name="Matsumura M."/>
            <person name="Nelson P.S."/>
            <person name="Palczewski K."/>
        </authorList>
    </citation>
    <scope>FUNCTION</scope>
    <scope>CATALYTIC ACTIVITY</scope>
    <scope>SUBSTRATE SPECIFICITY</scope>
</reference>
<reference key="4">
    <citation type="journal article" date="2010" name="Cell">
        <title>A tissue-specific atlas of mouse protein phosphorylation and expression.</title>
        <authorList>
            <person name="Huttlin E.L."/>
            <person name="Jedrychowski M.P."/>
            <person name="Elias J.E."/>
            <person name="Goswami T."/>
            <person name="Rad R."/>
            <person name="Beausoleil S.A."/>
            <person name="Villen J."/>
            <person name="Haas W."/>
            <person name="Sowa M.E."/>
            <person name="Gygi S.P."/>
        </authorList>
    </citation>
    <scope>IDENTIFICATION BY MASS SPECTROMETRY [LARGE SCALE ANALYSIS]</scope>
    <source>
        <tissue>Brain</tissue>
        <tissue>Brown adipose tissue</tissue>
        <tissue>Heart</tissue>
        <tissue>Kidney</tissue>
        <tissue>Liver</tissue>
        <tissue>Lung</tissue>
        <tissue>Spleen</tissue>
        <tissue>Testis</tissue>
    </source>
</reference>